<feature type="chain" id="PRO_0000295901" description="Ecto-NOX disulfide-thiol exchanger 1">
    <location>
        <begin position="1"/>
        <end position="643"/>
    </location>
</feature>
<feature type="domain" description="RRM" evidence="3">
    <location>
        <begin position="142"/>
        <end position="221"/>
    </location>
</feature>
<feature type="coiled-coil region" evidence="2">
    <location>
        <begin position="307"/>
        <end position="342"/>
    </location>
</feature>
<feature type="coiled-coil region" evidence="2">
    <location>
        <begin position="425"/>
        <end position="521"/>
    </location>
</feature>
<feature type="splice variant" id="VSP_027122" description="In isoform 2." evidence="4">
    <original>S</original>
    <variation>SEADIEDCAGDPADRGLHSA</variation>
    <location>
        <position position="420"/>
    </location>
</feature>
<sequence length="643" mass="73281">MVDAAGFESVAQCPRELHQMMAAAADGLGSIALDTTQLNMSVTDPTAWATAMNNLGMVPVGLPGQQLVSDSICVPGFDPGLNMMTGITPINPMIPGLGLVPPPPPTEVAVVKEIIHCKSCTLFPQNPNLPPPSTRERPPGCKTVFVGGLPENATEEIIQEVFEQCGDITAIRKSKKNFCHIRFAEEFMVDKAIYLSGYRMRLGSSTDKKDSGRLHVDFAQARDDFYEWECKQRMRAREERHRRKLEEDRLRPPSPPAIMHYSEHEAALLADKLKDDSKFSEAITVLLSWIERGEVNRRSANQFYSMVQSANSHVRRLMNEKATHEQEMEEAKENFKNALTGILTQFEQIVAVFNASTRQKAWDHFSKAQRKNIDIWRKHSEELRNAQSEQLMGIRREEEMEMSDDENCDSPTKKMRVDESALAAQAYALKEENDSLRWQLDAYRNEVELLKQEKEQLFRTEENLTKDQQLQFLQQTMQGMQQQLLAIQEELNNKKSELEQAKEEQSHTQALLKVLQEQLKGTKDLVETNGHSHEDANEINVLTVALVNQDRENNTEKRSQGLKSEKEALLIGIISTFLHVHPFGANIEYLWSYMQQLDSKISANEIEMLLMRLPRMFKQEFTGVGATLEKRWKLCAFEGIKTT</sequence>
<protein>
    <recommendedName>
        <fullName>Ecto-NOX disulfide-thiol exchanger 1</fullName>
    </recommendedName>
    <alternativeName>
        <fullName>Constitutive Ecto-NOX</fullName>
        <shortName>cNOX</shortName>
    </alternativeName>
    <domain>
        <recommendedName>
            <fullName>Hydroquinone [NADH] oxidase</fullName>
            <ecNumber>1.-.-.-</ecNumber>
        </recommendedName>
    </domain>
    <domain>
        <recommendedName>
            <fullName>Protein disulfide-thiol oxidoreductase</fullName>
            <ecNumber>1.-.-.-</ecNumber>
        </recommendedName>
    </domain>
</protein>
<reference key="1">
    <citation type="journal article" date="2005" name="Science">
        <title>The transcriptional landscape of the mammalian genome.</title>
        <authorList>
            <person name="Carninci P."/>
            <person name="Kasukawa T."/>
            <person name="Katayama S."/>
            <person name="Gough J."/>
            <person name="Frith M.C."/>
            <person name="Maeda N."/>
            <person name="Oyama R."/>
            <person name="Ravasi T."/>
            <person name="Lenhard B."/>
            <person name="Wells C."/>
            <person name="Kodzius R."/>
            <person name="Shimokawa K."/>
            <person name="Bajic V.B."/>
            <person name="Brenner S.E."/>
            <person name="Batalov S."/>
            <person name="Forrest A.R."/>
            <person name="Zavolan M."/>
            <person name="Davis M.J."/>
            <person name="Wilming L.G."/>
            <person name="Aidinis V."/>
            <person name="Allen J.E."/>
            <person name="Ambesi-Impiombato A."/>
            <person name="Apweiler R."/>
            <person name="Aturaliya R.N."/>
            <person name="Bailey T.L."/>
            <person name="Bansal M."/>
            <person name="Baxter L."/>
            <person name="Beisel K.W."/>
            <person name="Bersano T."/>
            <person name="Bono H."/>
            <person name="Chalk A.M."/>
            <person name="Chiu K.P."/>
            <person name="Choudhary V."/>
            <person name="Christoffels A."/>
            <person name="Clutterbuck D.R."/>
            <person name="Crowe M.L."/>
            <person name="Dalla E."/>
            <person name="Dalrymple B.P."/>
            <person name="de Bono B."/>
            <person name="Della Gatta G."/>
            <person name="di Bernardo D."/>
            <person name="Down T."/>
            <person name="Engstrom P."/>
            <person name="Fagiolini M."/>
            <person name="Faulkner G."/>
            <person name="Fletcher C.F."/>
            <person name="Fukushima T."/>
            <person name="Furuno M."/>
            <person name="Futaki S."/>
            <person name="Gariboldi M."/>
            <person name="Georgii-Hemming P."/>
            <person name="Gingeras T.R."/>
            <person name="Gojobori T."/>
            <person name="Green R.E."/>
            <person name="Gustincich S."/>
            <person name="Harbers M."/>
            <person name="Hayashi Y."/>
            <person name="Hensch T.K."/>
            <person name="Hirokawa N."/>
            <person name="Hill D."/>
            <person name="Huminiecki L."/>
            <person name="Iacono M."/>
            <person name="Ikeo K."/>
            <person name="Iwama A."/>
            <person name="Ishikawa T."/>
            <person name="Jakt M."/>
            <person name="Kanapin A."/>
            <person name="Katoh M."/>
            <person name="Kawasawa Y."/>
            <person name="Kelso J."/>
            <person name="Kitamura H."/>
            <person name="Kitano H."/>
            <person name="Kollias G."/>
            <person name="Krishnan S.P."/>
            <person name="Kruger A."/>
            <person name="Kummerfeld S.K."/>
            <person name="Kurochkin I.V."/>
            <person name="Lareau L.F."/>
            <person name="Lazarevic D."/>
            <person name="Lipovich L."/>
            <person name="Liu J."/>
            <person name="Liuni S."/>
            <person name="McWilliam S."/>
            <person name="Madan Babu M."/>
            <person name="Madera M."/>
            <person name="Marchionni L."/>
            <person name="Matsuda H."/>
            <person name="Matsuzawa S."/>
            <person name="Miki H."/>
            <person name="Mignone F."/>
            <person name="Miyake S."/>
            <person name="Morris K."/>
            <person name="Mottagui-Tabar S."/>
            <person name="Mulder N."/>
            <person name="Nakano N."/>
            <person name="Nakauchi H."/>
            <person name="Ng P."/>
            <person name="Nilsson R."/>
            <person name="Nishiguchi S."/>
            <person name="Nishikawa S."/>
            <person name="Nori F."/>
            <person name="Ohara O."/>
            <person name="Okazaki Y."/>
            <person name="Orlando V."/>
            <person name="Pang K.C."/>
            <person name="Pavan W.J."/>
            <person name="Pavesi G."/>
            <person name="Pesole G."/>
            <person name="Petrovsky N."/>
            <person name="Piazza S."/>
            <person name="Reed J."/>
            <person name="Reid J.F."/>
            <person name="Ring B.Z."/>
            <person name="Ringwald M."/>
            <person name="Rost B."/>
            <person name="Ruan Y."/>
            <person name="Salzberg S.L."/>
            <person name="Sandelin A."/>
            <person name="Schneider C."/>
            <person name="Schoenbach C."/>
            <person name="Sekiguchi K."/>
            <person name="Semple C.A."/>
            <person name="Seno S."/>
            <person name="Sessa L."/>
            <person name="Sheng Y."/>
            <person name="Shibata Y."/>
            <person name="Shimada H."/>
            <person name="Shimada K."/>
            <person name="Silva D."/>
            <person name="Sinclair B."/>
            <person name="Sperling S."/>
            <person name="Stupka E."/>
            <person name="Sugiura K."/>
            <person name="Sultana R."/>
            <person name="Takenaka Y."/>
            <person name="Taki K."/>
            <person name="Tammoja K."/>
            <person name="Tan S.L."/>
            <person name="Tang S."/>
            <person name="Taylor M.S."/>
            <person name="Tegner J."/>
            <person name="Teichmann S.A."/>
            <person name="Ueda H.R."/>
            <person name="van Nimwegen E."/>
            <person name="Verardo R."/>
            <person name="Wei C.L."/>
            <person name="Yagi K."/>
            <person name="Yamanishi H."/>
            <person name="Zabarovsky E."/>
            <person name="Zhu S."/>
            <person name="Zimmer A."/>
            <person name="Hide W."/>
            <person name="Bult C."/>
            <person name="Grimmond S.M."/>
            <person name="Teasdale R.D."/>
            <person name="Liu E.T."/>
            <person name="Brusic V."/>
            <person name="Quackenbush J."/>
            <person name="Wahlestedt C."/>
            <person name="Mattick J.S."/>
            <person name="Hume D.A."/>
            <person name="Kai C."/>
            <person name="Sasaki D."/>
            <person name="Tomaru Y."/>
            <person name="Fukuda S."/>
            <person name="Kanamori-Katayama M."/>
            <person name="Suzuki M."/>
            <person name="Aoki J."/>
            <person name="Arakawa T."/>
            <person name="Iida J."/>
            <person name="Imamura K."/>
            <person name="Itoh M."/>
            <person name="Kato T."/>
            <person name="Kawaji H."/>
            <person name="Kawagashira N."/>
            <person name="Kawashima T."/>
            <person name="Kojima M."/>
            <person name="Kondo S."/>
            <person name="Konno H."/>
            <person name="Nakano K."/>
            <person name="Ninomiya N."/>
            <person name="Nishio T."/>
            <person name="Okada M."/>
            <person name="Plessy C."/>
            <person name="Shibata K."/>
            <person name="Shiraki T."/>
            <person name="Suzuki S."/>
            <person name="Tagami M."/>
            <person name="Waki K."/>
            <person name="Watahiki A."/>
            <person name="Okamura-Oho Y."/>
            <person name="Suzuki H."/>
            <person name="Kawai J."/>
            <person name="Hayashizaki Y."/>
        </authorList>
    </citation>
    <scope>NUCLEOTIDE SEQUENCE [LARGE SCALE MRNA] (ISOFORM 1)</scope>
    <source>
        <strain>C57BL/6J</strain>
        <tissue>Eye</tissue>
    </source>
</reference>
<reference key="2">
    <citation type="journal article" date="2004" name="Genome Res.">
        <title>The status, quality, and expansion of the NIH full-length cDNA project: the Mammalian Gene Collection (MGC).</title>
        <authorList>
            <consortium name="The MGC Project Team"/>
        </authorList>
    </citation>
    <scope>NUCLEOTIDE SEQUENCE [LARGE SCALE MRNA] (ISOFORM 2)</scope>
    <source>
        <strain>C57BL/6J</strain>
        <tissue>Brain</tissue>
    </source>
</reference>
<evidence type="ECO:0000250" key="1"/>
<evidence type="ECO:0000255" key="2"/>
<evidence type="ECO:0000255" key="3">
    <source>
        <dbReference type="PROSITE-ProRule" id="PRU00176"/>
    </source>
</evidence>
<evidence type="ECO:0000303" key="4">
    <source>
    </source>
</evidence>
<evidence type="ECO:0000305" key="5"/>
<organism>
    <name type="scientific">Mus musculus</name>
    <name type="common">Mouse</name>
    <dbReference type="NCBI Taxonomy" id="10090"/>
    <lineage>
        <taxon>Eukaryota</taxon>
        <taxon>Metazoa</taxon>
        <taxon>Chordata</taxon>
        <taxon>Craniata</taxon>
        <taxon>Vertebrata</taxon>
        <taxon>Euteleostomi</taxon>
        <taxon>Mammalia</taxon>
        <taxon>Eutheria</taxon>
        <taxon>Euarchontoglires</taxon>
        <taxon>Glires</taxon>
        <taxon>Rodentia</taxon>
        <taxon>Myomorpha</taxon>
        <taxon>Muroidea</taxon>
        <taxon>Muridae</taxon>
        <taxon>Murinae</taxon>
        <taxon>Mus</taxon>
        <taxon>Mus</taxon>
    </lineage>
</organism>
<proteinExistence type="evidence at transcript level"/>
<keyword id="KW-0025">Alternative splicing</keyword>
<keyword id="KW-0090">Biological rhythms</keyword>
<keyword id="KW-1003">Cell membrane</keyword>
<keyword id="KW-0175">Coiled coil</keyword>
<keyword id="KW-0186">Copper</keyword>
<keyword id="KW-0249">Electron transport</keyword>
<keyword id="KW-0472">Membrane</keyword>
<keyword id="KW-0520">NAD</keyword>
<keyword id="KW-0560">Oxidoreductase</keyword>
<keyword id="KW-1185">Reference proteome</keyword>
<keyword id="KW-0964">Secreted</keyword>
<keyword id="KW-0813">Transport</keyword>
<name>ENOX1_MOUSE</name>
<dbReference type="EC" id="1.-.-.-"/>
<dbReference type="EMBL" id="AK051821">
    <property type="protein sequence ID" value="BAC34782.1"/>
    <property type="molecule type" value="mRNA"/>
</dbReference>
<dbReference type="EMBL" id="BC052062">
    <property type="protein sequence ID" value="AAH52062.1"/>
    <property type="molecule type" value="mRNA"/>
</dbReference>
<dbReference type="CCDS" id="CCDS27290.1">
    <molecule id="Q8BHR2-1"/>
</dbReference>
<dbReference type="CCDS" id="CCDS88717.1">
    <molecule id="Q8BHR2-2"/>
</dbReference>
<dbReference type="RefSeq" id="NP_001240688.1">
    <molecule id="Q8BHR2-2"/>
    <property type="nucleotide sequence ID" value="NM_001253759.1"/>
</dbReference>
<dbReference type="RefSeq" id="NP_766401.1">
    <molecule id="Q8BHR2-1"/>
    <property type="nucleotide sequence ID" value="NM_172813.3"/>
</dbReference>
<dbReference type="RefSeq" id="XP_006519062.1">
    <molecule id="Q8BHR2-2"/>
    <property type="nucleotide sequence ID" value="XM_006518999.5"/>
</dbReference>
<dbReference type="RefSeq" id="XP_006519063.1">
    <molecule id="Q8BHR2-2"/>
    <property type="nucleotide sequence ID" value="XM_006519000.5"/>
</dbReference>
<dbReference type="RefSeq" id="XP_006519064.1">
    <molecule id="Q8BHR2-2"/>
    <property type="nucleotide sequence ID" value="XM_006519001.5"/>
</dbReference>
<dbReference type="RefSeq" id="XP_011243365.1">
    <molecule id="Q8BHR2-2"/>
    <property type="nucleotide sequence ID" value="XM_011245063.4"/>
</dbReference>
<dbReference type="RefSeq" id="XP_011243366.1">
    <molecule id="Q8BHR2-2"/>
    <property type="nucleotide sequence ID" value="XM_011245064.4"/>
</dbReference>
<dbReference type="RefSeq" id="XP_011243367.1">
    <property type="nucleotide sequence ID" value="XM_011245065.2"/>
</dbReference>
<dbReference type="RefSeq" id="XP_011243368.1">
    <molecule id="Q8BHR2-1"/>
    <property type="nucleotide sequence ID" value="XM_011245066.4"/>
</dbReference>
<dbReference type="RefSeq" id="XP_017171507.1">
    <molecule id="Q8BHR2-1"/>
    <property type="nucleotide sequence ID" value="XM_017316018.3"/>
</dbReference>
<dbReference type="RefSeq" id="XP_030103660.1">
    <molecule id="Q8BHR2-2"/>
    <property type="nucleotide sequence ID" value="XM_030247800.2"/>
</dbReference>
<dbReference type="RefSeq" id="XP_030103661.1">
    <molecule id="Q8BHR2-2"/>
    <property type="nucleotide sequence ID" value="XM_030247801.2"/>
</dbReference>
<dbReference type="RefSeq" id="XP_030103662.1">
    <molecule id="Q8BHR2-2"/>
    <property type="nucleotide sequence ID" value="XM_030247802.2"/>
</dbReference>
<dbReference type="RefSeq" id="XP_030103663.1">
    <molecule id="Q8BHR2-2"/>
    <property type="nucleotide sequence ID" value="XM_030247803.2"/>
</dbReference>
<dbReference type="RefSeq" id="XP_030103666.1">
    <molecule id="Q8BHR2-1"/>
    <property type="nucleotide sequence ID" value="XM_030247806.2"/>
</dbReference>
<dbReference type="RefSeq" id="XP_036014485.1">
    <molecule id="Q8BHR2-1"/>
    <property type="nucleotide sequence ID" value="XM_036158592.1"/>
</dbReference>
<dbReference type="SMR" id="Q8BHR2"/>
<dbReference type="FunCoup" id="Q8BHR2">
    <property type="interactions" value="1449"/>
</dbReference>
<dbReference type="STRING" id="10090.ENSMUSP00000022589"/>
<dbReference type="iPTMnet" id="Q8BHR2"/>
<dbReference type="PhosphoSitePlus" id="Q8BHR2"/>
<dbReference type="PaxDb" id="10090-ENSMUSP00000022589"/>
<dbReference type="PeptideAtlas" id="Q8BHR2"/>
<dbReference type="ProteomicsDB" id="275455">
    <molecule id="Q8BHR2-1"/>
</dbReference>
<dbReference type="ProteomicsDB" id="275456">
    <molecule id="Q8BHR2-2"/>
</dbReference>
<dbReference type="Antibodypedia" id="23523">
    <property type="antibodies" value="87 antibodies from 21 providers"/>
</dbReference>
<dbReference type="Ensembl" id="ENSMUST00000022589.9">
    <molecule id="Q8BHR2-1"/>
    <property type="protein sequence ID" value="ENSMUSP00000022589.8"/>
    <property type="gene ID" value="ENSMUSG00000022012.10"/>
</dbReference>
<dbReference type="Ensembl" id="ENSMUST00000227662.2">
    <molecule id="Q8BHR2-2"/>
    <property type="protein sequence ID" value="ENSMUSP00000154512.2"/>
    <property type="gene ID" value="ENSMUSG00000022012.10"/>
</dbReference>
<dbReference type="GeneID" id="239188"/>
<dbReference type="KEGG" id="mmu:239188"/>
<dbReference type="UCSC" id="uc007urv.2">
    <molecule id="Q8BHR2-1"/>
    <property type="organism name" value="mouse"/>
</dbReference>
<dbReference type="UCSC" id="uc007urz.2">
    <molecule id="Q8BHR2-2"/>
    <property type="organism name" value="mouse"/>
</dbReference>
<dbReference type="AGR" id="MGI:2444896"/>
<dbReference type="CTD" id="55068"/>
<dbReference type="MGI" id="MGI:2444896">
    <property type="gene designation" value="Enox1"/>
</dbReference>
<dbReference type="VEuPathDB" id="HostDB:ENSMUSG00000022012"/>
<dbReference type="eggNOG" id="ENOG502QQ8G">
    <property type="taxonomic scope" value="Eukaryota"/>
</dbReference>
<dbReference type="GeneTree" id="ENSGT00390000006788"/>
<dbReference type="HOGENOM" id="CLU_019282_1_1_1"/>
<dbReference type="InParanoid" id="Q8BHR2"/>
<dbReference type="OMA" id="KELTQMM"/>
<dbReference type="PhylomeDB" id="Q8BHR2"/>
<dbReference type="TreeFam" id="TF323802"/>
<dbReference type="BioGRID-ORCS" id="239188">
    <property type="hits" value="3 hits in 76 CRISPR screens"/>
</dbReference>
<dbReference type="ChiTaRS" id="Enox1">
    <property type="organism name" value="mouse"/>
</dbReference>
<dbReference type="PRO" id="PR:Q8BHR2"/>
<dbReference type="Proteomes" id="UP000000589">
    <property type="component" value="Chromosome 14"/>
</dbReference>
<dbReference type="RNAct" id="Q8BHR2">
    <property type="molecule type" value="protein"/>
</dbReference>
<dbReference type="Bgee" id="ENSMUSG00000022012">
    <property type="expression patterns" value="Expressed in animal zygote and 178 other cell types or tissues"/>
</dbReference>
<dbReference type="ExpressionAtlas" id="Q8BHR2">
    <property type="expression patterns" value="baseline and differential"/>
</dbReference>
<dbReference type="GO" id="GO:0009897">
    <property type="term" value="C:external side of plasma membrane"/>
    <property type="evidence" value="ECO:0007669"/>
    <property type="project" value="InterPro"/>
</dbReference>
<dbReference type="GO" id="GO:0005576">
    <property type="term" value="C:extracellular region"/>
    <property type="evidence" value="ECO:0007669"/>
    <property type="project" value="UniProtKB-SubCell"/>
</dbReference>
<dbReference type="GO" id="GO:0003954">
    <property type="term" value="F:NADH dehydrogenase activity"/>
    <property type="evidence" value="ECO:0007669"/>
    <property type="project" value="Ensembl"/>
</dbReference>
<dbReference type="GO" id="GO:0003756">
    <property type="term" value="F:protein disulfide isomerase activity"/>
    <property type="evidence" value="ECO:0007669"/>
    <property type="project" value="Ensembl"/>
</dbReference>
<dbReference type="GO" id="GO:0003723">
    <property type="term" value="F:RNA binding"/>
    <property type="evidence" value="ECO:0007669"/>
    <property type="project" value="InterPro"/>
</dbReference>
<dbReference type="GO" id="GO:0007624">
    <property type="term" value="P:ultradian rhythm"/>
    <property type="evidence" value="ECO:0007669"/>
    <property type="project" value="InterPro"/>
</dbReference>
<dbReference type="CDD" id="cd12228">
    <property type="entry name" value="RRM_ENOX"/>
    <property type="match status" value="1"/>
</dbReference>
<dbReference type="FunFam" id="3.30.70.330:FF:000083">
    <property type="entry name" value="Putative ecto-NOX disulfide-thiol exchanger 1"/>
    <property type="match status" value="1"/>
</dbReference>
<dbReference type="Gene3D" id="3.30.70.330">
    <property type="match status" value="1"/>
</dbReference>
<dbReference type="InterPro" id="IPR038876">
    <property type="entry name" value="ENOX"/>
</dbReference>
<dbReference type="InterPro" id="IPR056611">
    <property type="entry name" value="ENOX1/2_dom"/>
</dbReference>
<dbReference type="InterPro" id="IPR034140">
    <property type="entry name" value="ENOX_RRM"/>
</dbReference>
<dbReference type="InterPro" id="IPR012677">
    <property type="entry name" value="Nucleotide-bd_a/b_plait_sf"/>
</dbReference>
<dbReference type="InterPro" id="IPR035979">
    <property type="entry name" value="RBD_domain_sf"/>
</dbReference>
<dbReference type="InterPro" id="IPR000504">
    <property type="entry name" value="RRM_dom"/>
</dbReference>
<dbReference type="PANTHER" id="PTHR16001">
    <property type="entry name" value="ECTO-NOX DISULFIDE-THIOL EXCHANGER"/>
    <property type="match status" value="1"/>
</dbReference>
<dbReference type="PANTHER" id="PTHR16001:SF6">
    <property type="entry name" value="ECTO-NOX DISULFIDE-THIOL EXCHANGER 1"/>
    <property type="match status" value="1"/>
</dbReference>
<dbReference type="Pfam" id="PF23267">
    <property type="entry name" value="ENOX1"/>
    <property type="match status" value="1"/>
</dbReference>
<dbReference type="Pfam" id="PF00076">
    <property type="entry name" value="RRM_1"/>
    <property type="match status" value="1"/>
</dbReference>
<dbReference type="SMART" id="SM00360">
    <property type="entry name" value="RRM"/>
    <property type="match status" value="1"/>
</dbReference>
<dbReference type="SUPFAM" id="SSF54928">
    <property type="entry name" value="RNA-binding domain, RBD"/>
    <property type="match status" value="1"/>
</dbReference>
<dbReference type="PROSITE" id="PS50102">
    <property type="entry name" value="RRM"/>
    <property type="match status" value="1"/>
</dbReference>
<gene>
    <name type="primary">Enox1</name>
</gene>
<accession>Q8BHR2</accession>
<accession>Q80WS5</accession>
<comment type="function">
    <text evidence="1">Probably acts as a terminal oxidase of plasma electron transport from cytosolic NAD(P)H via hydroquinones to acceptors at the cell surface. Hydroquinone oxidase activity alternates with a protein disulfide-thiol interchange/oxidoreductase activity which may control physical membrane displacements associated with vesicle budding or cell enlargement. The activities oscillate with a period length of 24 minutes and play a role in control of the ultradian cellular biological clock (By similarity).</text>
</comment>
<comment type="cofactor">
    <cofactor evidence="1">
        <name>Cu cation</name>
        <dbReference type="ChEBI" id="CHEBI:23378"/>
    </cofactor>
</comment>
<comment type="activity regulation">
    <text evidence="1">Not inhibited by the antitumor sulfonylurea LY181984, the vabilloid capsaicin, and retinoids.</text>
</comment>
<comment type="subcellular location">
    <subcellularLocation>
        <location evidence="1">Cell membrane</location>
    </subcellularLocation>
    <subcellularLocation>
        <location evidence="1">Secreted</location>
        <location evidence="1">Extracellular space</location>
    </subcellularLocation>
    <text evidence="1">Extracellular and plasma membrane-associated.</text>
</comment>
<comment type="alternative products">
    <event type="alternative splicing"/>
    <isoform>
        <id>Q8BHR2-1</id>
        <name>1</name>
        <sequence type="displayed"/>
    </isoform>
    <isoform>
        <id>Q8BHR2-2</id>
        <name>2</name>
        <sequence type="described" ref="VSP_027122"/>
    </isoform>
</comment>
<comment type="similarity">
    <text evidence="5">Belongs to the ENOX family.</text>
</comment>